<evidence type="ECO:0000255" key="1">
    <source>
        <dbReference type="HAMAP-Rule" id="MF_00391"/>
    </source>
</evidence>
<evidence type="ECO:0000256" key="2">
    <source>
        <dbReference type="SAM" id="MobiDB-lite"/>
    </source>
</evidence>
<evidence type="ECO:0000305" key="3"/>
<sequence>MKRTFQPSVIKRKRTHGFRARMATKKGRQVLARRRAKGRHRLTV</sequence>
<protein>
    <recommendedName>
        <fullName evidence="1">Large ribosomal subunit protein bL34</fullName>
    </recommendedName>
    <alternativeName>
        <fullName evidence="3">50S ribosomal protein L34</fullName>
    </alternativeName>
</protein>
<gene>
    <name evidence="1" type="primary">rpmH</name>
    <name type="ordered locus">Pcryo_0002</name>
</gene>
<comment type="similarity">
    <text evidence="1">Belongs to the bacterial ribosomal protein bL34 family.</text>
</comment>
<feature type="chain" id="PRO_1000013415" description="Large ribosomal subunit protein bL34">
    <location>
        <begin position="1"/>
        <end position="44"/>
    </location>
</feature>
<feature type="region of interest" description="Disordered" evidence="2">
    <location>
        <begin position="22"/>
        <end position="44"/>
    </location>
</feature>
<organism>
    <name type="scientific">Psychrobacter cryohalolentis (strain ATCC BAA-1226 / DSM 17306 / VKM B-2378 / K5)</name>
    <dbReference type="NCBI Taxonomy" id="335284"/>
    <lineage>
        <taxon>Bacteria</taxon>
        <taxon>Pseudomonadati</taxon>
        <taxon>Pseudomonadota</taxon>
        <taxon>Gammaproteobacteria</taxon>
        <taxon>Moraxellales</taxon>
        <taxon>Moraxellaceae</taxon>
        <taxon>Psychrobacter</taxon>
    </lineage>
</organism>
<reference key="1">
    <citation type="submission" date="2006-03" db="EMBL/GenBank/DDBJ databases">
        <title>Complete sequence of chromosome of Psychrobacter cryohalolentis K5.</title>
        <authorList>
            <consortium name="US DOE Joint Genome Institute"/>
            <person name="Copeland A."/>
            <person name="Lucas S."/>
            <person name="Lapidus A."/>
            <person name="Barry K."/>
            <person name="Detter J.C."/>
            <person name="Glavina T."/>
            <person name="Hammon N."/>
            <person name="Israni S."/>
            <person name="Dalin E."/>
            <person name="Tice H."/>
            <person name="Pitluck S."/>
            <person name="Brettin T."/>
            <person name="Bruce D."/>
            <person name="Han C."/>
            <person name="Tapia R."/>
            <person name="Sims D.R."/>
            <person name="Gilna P."/>
            <person name="Schmutz J."/>
            <person name="Larimer F."/>
            <person name="Land M."/>
            <person name="Hauser L."/>
            <person name="Kyrpides N."/>
            <person name="Kim E."/>
            <person name="Richardson P."/>
        </authorList>
    </citation>
    <scope>NUCLEOTIDE SEQUENCE [LARGE SCALE GENOMIC DNA]</scope>
    <source>
        <strain>ATCC BAA-1226 / DSM 17306 / VKM B-2378 / K5</strain>
    </source>
</reference>
<accession>Q1QEW7</accession>
<proteinExistence type="inferred from homology"/>
<name>RL34_PSYCK</name>
<dbReference type="EMBL" id="CP000323">
    <property type="protein sequence ID" value="ABE73786.1"/>
    <property type="molecule type" value="Genomic_DNA"/>
</dbReference>
<dbReference type="RefSeq" id="WP_007394757.1">
    <property type="nucleotide sequence ID" value="NC_007969.1"/>
</dbReference>
<dbReference type="SMR" id="Q1QEW7"/>
<dbReference type="STRING" id="335284.Pcryo_0002"/>
<dbReference type="GeneID" id="84621714"/>
<dbReference type="KEGG" id="pcr:Pcryo_0002"/>
<dbReference type="eggNOG" id="COG0230">
    <property type="taxonomic scope" value="Bacteria"/>
</dbReference>
<dbReference type="HOGENOM" id="CLU_129938_2_0_6"/>
<dbReference type="Proteomes" id="UP000002425">
    <property type="component" value="Chromosome"/>
</dbReference>
<dbReference type="GO" id="GO:1990904">
    <property type="term" value="C:ribonucleoprotein complex"/>
    <property type="evidence" value="ECO:0007669"/>
    <property type="project" value="UniProtKB-KW"/>
</dbReference>
<dbReference type="GO" id="GO:0005840">
    <property type="term" value="C:ribosome"/>
    <property type="evidence" value="ECO:0007669"/>
    <property type="project" value="UniProtKB-KW"/>
</dbReference>
<dbReference type="GO" id="GO:0003735">
    <property type="term" value="F:structural constituent of ribosome"/>
    <property type="evidence" value="ECO:0007669"/>
    <property type="project" value="InterPro"/>
</dbReference>
<dbReference type="GO" id="GO:0006412">
    <property type="term" value="P:translation"/>
    <property type="evidence" value="ECO:0007669"/>
    <property type="project" value="UniProtKB-UniRule"/>
</dbReference>
<dbReference type="FunFam" id="1.10.287.3980:FF:000001">
    <property type="entry name" value="Mitochondrial ribosomal protein L34"/>
    <property type="match status" value="1"/>
</dbReference>
<dbReference type="Gene3D" id="1.10.287.3980">
    <property type="match status" value="1"/>
</dbReference>
<dbReference type="HAMAP" id="MF_00391">
    <property type="entry name" value="Ribosomal_bL34"/>
    <property type="match status" value="1"/>
</dbReference>
<dbReference type="InterPro" id="IPR000271">
    <property type="entry name" value="Ribosomal_bL34"/>
</dbReference>
<dbReference type="InterPro" id="IPR020939">
    <property type="entry name" value="Ribosomal_bL34_CS"/>
</dbReference>
<dbReference type="NCBIfam" id="TIGR01030">
    <property type="entry name" value="rpmH_bact"/>
    <property type="match status" value="1"/>
</dbReference>
<dbReference type="PANTHER" id="PTHR14503:SF4">
    <property type="entry name" value="LARGE RIBOSOMAL SUBUNIT PROTEIN BL34M"/>
    <property type="match status" value="1"/>
</dbReference>
<dbReference type="PANTHER" id="PTHR14503">
    <property type="entry name" value="MITOCHONDRIAL RIBOSOMAL PROTEIN 34 FAMILY MEMBER"/>
    <property type="match status" value="1"/>
</dbReference>
<dbReference type="Pfam" id="PF00468">
    <property type="entry name" value="Ribosomal_L34"/>
    <property type="match status" value="1"/>
</dbReference>
<dbReference type="PROSITE" id="PS00784">
    <property type="entry name" value="RIBOSOMAL_L34"/>
    <property type="match status" value="1"/>
</dbReference>
<keyword id="KW-0687">Ribonucleoprotein</keyword>
<keyword id="KW-0689">Ribosomal protein</keyword>